<reference key="1">
    <citation type="journal article" date="2001" name="DNA Res.">
        <title>Complete genomic sequence of the filamentous nitrogen-fixing cyanobacterium Anabaena sp. strain PCC 7120.</title>
        <authorList>
            <person name="Kaneko T."/>
            <person name="Nakamura Y."/>
            <person name="Wolk C.P."/>
            <person name="Kuritz T."/>
            <person name="Sasamoto S."/>
            <person name="Watanabe A."/>
            <person name="Iriguchi M."/>
            <person name="Ishikawa A."/>
            <person name="Kawashima K."/>
            <person name="Kimura T."/>
            <person name="Kishida Y."/>
            <person name="Kohara M."/>
            <person name="Matsumoto M."/>
            <person name="Matsuno A."/>
            <person name="Muraki A."/>
            <person name="Nakazaki N."/>
            <person name="Shimpo S."/>
            <person name="Sugimoto M."/>
            <person name="Takazawa M."/>
            <person name="Yamada M."/>
            <person name="Yasuda M."/>
            <person name="Tabata S."/>
        </authorList>
    </citation>
    <scope>NUCLEOTIDE SEQUENCE [LARGE SCALE GENOMIC DNA]</scope>
    <source>
        <strain>PCC 7120 / SAG 25.82 / UTEX 2576</strain>
    </source>
</reference>
<sequence>MQPLSILVLHGPNLNLLGKREPGVYGSTTLAEINSLLAEAALKLQAKVFPLQSNHEGVLVDAIHEALGKHQGILINAGAYTHTSVALRDAIAAVNLPTVEVHLSNIYRREDFRHHSYIAPVVIGQISGFGVQSYLLGLQGLVAHLKG</sequence>
<evidence type="ECO:0000255" key="1">
    <source>
        <dbReference type="HAMAP-Rule" id="MF_00169"/>
    </source>
</evidence>
<dbReference type="EC" id="4.2.1.10" evidence="1"/>
<dbReference type="EMBL" id="BA000019">
    <property type="protein sequence ID" value="BAB74481.1"/>
    <property type="molecule type" value="Genomic_DNA"/>
</dbReference>
<dbReference type="PIR" id="AG2153">
    <property type="entry name" value="AG2153"/>
</dbReference>
<dbReference type="RefSeq" id="WP_010996933.1">
    <property type="nucleotide sequence ID" value="NZ_RSCN01000003.1"/>
</dbReference>
<dbReference type="SMR" id="Q8YTE0"/>
<dbReference type="STRING" id="103690.gene:10494816"/>
<dbReference type="KEGG" id="ana:alr2782"/>
<dbReference type="eggNOG" id="COG0757">
    <property type="taxonomic scope" value="Bacteria"/>
</dbReference>
<dbReference type="OrthoDB" id="9790793at2"/>
<dbReference type="UniPathway" id="UPA00053">
    <property type="reaction ID" value="UER00086"/>
</dbReference>
<dbReference type="Proteomes" id="UP000002483">
    <property type="component" value="Chromosome"/>
</dbReference>
<dbReference type="GO" id="GO:0003855">
    <property type="term" value="F:3-dehydroquinate dehydratase activity"/>
    <property type="evidence" value="ECO:0007669"/>
    <property type="project" value="UniProtKB-UniRule"/>
</dbReference>
<dbReference type="GO" id="GO:0008652">
    <property type="term" value="P:amino acid biosynthetic process"/>
    <property type="evidence" value="ECO:0007669"/>
    <property type="project" value="UniProtKB-KW"/>
</dbReference>
<dbReference type="GO" id="GO:0009073">
    <property type="term" value="P:aromatic amino acid family biosynthetic process"/>
    <property type="evidence" value="ECO:0007669"/>
    <property type="project" value="UniProtKB-KW"/>
</dbReference>
<dbReference type="GO" id="GO:0009423">
    <property type="term" value="P:chorismate biosynthetic process"/>
    <property type="evidence" value="ECO:0007669"/>
    <property type="project" value="UniProtKB-UniRule"/>
</dbReference>
<dbReference type="GO" id="GO:0019631">
    <property type="term" value="P:quinate catabolic process"/>
    <property type="evidence" value="ECO:0007669"/>
    <property type="project" value="TreeGrafter"/>
</dbReference>
<dbReference type="CDD" id="cd00466">
    <property type="entry name" value="DHQase_II"/>
    <property type="match status" value="1"/>
</dbReference>
<dbReference type="Gene3D" id="3.40.50.9100">
    <property type="entry name" value="Dehydroquinase, class II"/>
    <property type="match status" value="1"/>
</dbReference>
<dbReference type="HAMAP" id="MF_00169">
    <property type="entry name" value="AroQ"/>
    <property type="match status" value="1"/>
</dbReference>
<dbReference type="InterPro" id="IPR001874">
    <property type="entry name" value="DHquinase_II"/>
</dbReference>
<dbReference type="InterPro" id="IPR018509">
    <property type="entry name" value="DHquinase_II_CS"/>
</dbReference>
<dbReference type="InterPro" id="IPR036441">
    <property type="entry name" value="DHquinase_II_sf"/>
</dbReference>
<dbReference type="NCBIfam" id="TIGR01088">
    <property type="entry name" value="aroQ"/>
    <property type="match status" value="1"/>
</dbReference>
<dbReference type="NCBIfam" id="NF003805">
    <property type="entry name" value="PRK05395.1-2"/>
    <property type="match status" value="1"/>
</dbReference>
<dbReference type="NCBIfam" id="NF003806">
    <property type="entry name" value="PRK05395.1-3"/>
    <property type="match status" value="1"/>
</dbReference>
<dbReference type="NCBIfam" id="NF003807">
    <property type="entry name" value="PRK05395.1-4"/>
    <property type="match status" value="1"/>
</dbReference>
<dbReference type="PANTHER" id="PTHR21272">
    <property type="entry name" value="CATABOLIC 3-DEHYDROQUINASE"/>
    <property type="match status" value="1"/>
</dbReference>
<dbReference type="PANTHER" id="PTHR21272:SF3">
    <property type="entry name" value="CATABOLIC 3-DEHYDROQUINASE"/>
    <property type="match status" value="1"/>
</dbReference>
<dbReference type="Pfam" id="PF01220">
    <property type="entry name" value="DHquinase_II"/>
    <property type="match status" value="1"/>
</dbReference>
<dbReference type="PIRSF" id="PIRSF001399">
    <property type="entry name" value="DHquinase_II"/>
    <property type="match status" value="1"/>
</dbReference>
<dbReference type="SUPFAM" id="SSF52304">
    <property type="entry name" value="Type II 3-dehydroquinate dehydratase"/>
    <property type="match status" value="1"/>
</dbReference>
<dbReference type="PROSITE" id="PS01029">
    <property type="entry name" value="DEHYDROQUINASE_II"/>
    <property type="match status" value="1"/>
</dbReference>
<keyword id="KW-0028">Amino-acid biosynthesis</keyword>
<keyword id="KW-0057">Aromatic amino acid biosynthesis</keyword>
<keyword id="KW-0456">Lyase</keyword>
<keyword id="KW-1185">Reference proteome</keyword>
<feature type="chain" id="PRO_0000159866" description="3-dehydroquinate dehydratase">
    <location>
        <begin position="1"/>
        <end position="147"/>
    </location>
</feature>
<feature type="active site" description="Proton acceptor" evidence="1">
    <location>
        <position position="25"/>
    </location>
</feature>
<feature type="active site" description="Proton donor" evidence="1">
    <location>
        <position position="102"/>
    </location>
</feature>
<feature type="binding site" evidence="1">
    <location>
        <position position="76"/>
    </location>
    <ligand>
        <name>substrate</name>
    </ligand>
</feature>
<feature type="binding site" evidence="1">
    <location>
        <position position="82"/>
    </location>
    <ligand>
        <name>substrate</name>
    </ligand>
</feature>
<feature type="binding site" evidence="1">
    <location>
        <position position="89"/>
    </location>
    <ligand>
        <name>substrate</name>
    </ligand>
</feature>
<feature type="binding site" evidence="1">
    <location>
        <begin position="103"/>
        <end position="104"/>
    </location>
    <ligand>
        <name>substrate</name>
    </ligand>
</feature>
<feature type="binding site" evidence="1">
    <location>
        <position position="113"/>
    </location>
    <ligand>
        <name>substrate</name>
    </ligand>
</feature>
<feature type="site" description="Transition state stabilizer" evidence="1">
    <location>
        <position position="20"/>
    </location>
</feature>
<organism>
    <name type="scientific">Nostoc sp. (strain PCC 7120 / SAG 25.82 / UTEX 2576)</name>
    <dbReference type="NCBI Taxonomy" id="103690"/>
    <lineage>
        <taxon>Bacteria</taxon>
        <taxon>Bacillati</taxon>
        <taxon>Cyanobacteriota</taxon>
        <taxon>Cyanophyceae</taxon>
        <taxon>Nostocales</taxon>
        <taxon>Nostocaceae</taxon>
        <taxon>Nostoc</taxon>
    </lineage>
</organism>
<protein>
    <recommendedName>
        <fullName evidence="1">3-dehydroquinate dehydratase</fullName>
        <shortName evidence="1">3-dehydroquinase</shortName>
        <ecNumber evidence="1">4.2.1.10</ecNumber>
    </recommendedName>
    <alternativeName>
        <fullName evidence="1">Type II DHQase</fullName>
    </alternativeName>
</protein>
<proteinExistence type="inferred from homology"/>
<comment type="function">
    <text evidence="1">Catalyzes a trans-dehydration via an enolate intermediate.</text>
</comment>
<comment type="catalytic activity">
    <reaction evidence="1">
        <text>3-dehydroquinate = 3-dehydroshikimate + H2O</text>
        <dbReference type="Rhea" id="RHEA:21096"/>
        <dbReference type="ChEBI" id="CHEBI:15377"/>
        <dbReference type="ChEBI" id="CHEBI:16630"/>
        <dbReference type="ChEBI" id="CHEBI:32364"/>
        <dbReference type="EC" id="4.2.1.10"/>
    </reaction>
</comment>
<comment type="pathway">
    <text evidence="1">Metabolic intermediate biosynthesis; chorismate biosynthesis; chorismate from D-erythrose 4-phosphate and phosphoenolpyruvate: step 3/7.</text>
</comment>
<comment type="subunit">
    <text evidence="1">Homododecamer.</text>
</comment>
<comment type="similarity">
    <text evidence="1">Belongs to the type-II 3-dehydroquinase family.</text>
</comment>
<accession>Q8YTE0</accession>
<gene>
    <name evidence="1" type="primary">aroQ</name>
    <name type="ordered locus">alr2782</name>
</gene>
<name>AROQ_NOSS1</name>